<organism>
    <name type="scientific">Zea mays</name>
    <name type="common">Maize</name>
    <dbReference type="NCBI Taxonomy" id="4577"/>
    <lineage>
        <taxon>Eukaryota</taxon>
        <taxon>Viridiplantae</taxon>
        <taxon>Streptophyta</taxon>
        <taxon>Embryophyta</taxon>
        <taxon>Tracheophyta</taxon>
        <taxon>Spermatophyta</taxon>
        <taxon>Magnoliopsida</taxon>
        <taxon>Liliopsida</taxon>
        <taxon>Poales</taxon>
        <taxon>Poaceae</taxon>
        <taxon>PACMAD clade</taxon>
        <taxon>Panicoideae</taxon>
        <taxon>Andropogonodae</taxon>
        <taxon>Andropogoneae</taxon>
        <taxon>Tripsacinae</taxon>
        <taxon>Zea</taxon>
    </lineage>
</organism>
<dbReference type="EC" id="2.4.1.202" evidence="3 4"/>
<dbReference type="EMBL" id="AF331855">
    <property type="protein sequence ID" value="AAL57038.1"/>
    <property type="molecule type" value="Genomic_DNA"/>
</dbReference>
<dbReference type="EMBL" id="BT042760">
    <property type="protein sequence ID" value="ACF87765.1"/>
    <property type="molecule type" value="mRNA"/>
</dbReference>
<dbReference type="RefSeq" id="NP_001142152.1">
    <property type="nucleotide sequence ID" value="NM_001148680.1"/>
</dbReference>
<dbReference type="SMR" id="B4G072"/>
<dbReference type="FunCoup" id="B4G072">
    <property type="interactions" value="68"/>
</dbReference>
<dbReference type="STRING" id="4577.B4G072"/>
<dbReference type="CAZy" id="GT1">
    <property type="family name" value="Glycosyltransferase Family 1"/>
</dbReference>
<dbReference type="PaxDb" id="4577-GRMZM2G161335_P01"/>
<dbReference type="EnsemblPlants" id="Zm00001eb033030_T001">
    <property type="protein sequence ID" value="Zm00001eb033030_P001"/>
    <property type="gene ID" value="Zm00001eb033030"/>
</dbReference>
<dbReference type="GeneID" id="100274317"/>
<dbReference type="Gramene" id="Zm00001eb033030_T001">
    <property type="protein sequence ID" value="Zm00001eb033030_P001"/>
    <property type="gene ID" value="Zm00001eb033030"/>
</dbReference>
<dbReference type="KEGG" id="zma:100274317"/>
<dbReference type="MaizeGDB" id="9021865"/>
<dbReference type="eggNOG" id="KOG1192">
    <property type="taxonomic scope" value="Eukaryota"/>
</dbReference>
<dbReference type="HOGENOM" id="CLU_001724_0_0_1"/>
<dbReference type="InParanoid" id="B4G072"/>
<dbReference type="OMA" id="IERMMDS"/>
<dbReference type="OrthoDB" id="5835829at2759"/>
<dbReference type="BioCyc" id="MetaCyc:MONOMER-10603"/>
<dbReference type="SABIO-RK" id="B4G072"/>
<dbReference type="Proteomes" id="UP000007305">
    <property type="component" value="Chromosome 1"/>
</dbReference>
<dbReference type="ExpressionAtlas" id="B4G072">
    <property type="expression patterns" value="baseline and differential"/>
</dbReference>
<dbReference type="GO" id="GO:0005737">
    <property type="term" value="C:cytoplasm"/>
    <property type="evidence" value="ECO:0000318"/>
    <property type="project" value="GO_Central"/>
</dbReference>
<dbReference type="GO" id="GO:0047254">
    <property type="term" value="F:2,4-dihydroxy-7-methoxy-2H-1,4-benzoxazin-3(4H)-one 2-D-glucosyltransferase activity"/>
    <property type="evidence" value="ECO:0000314"/>
    <property type="project" value="UniProtKB"/>
</dbReference>
<dbReference type="GO" id="GO:0080043">
    <property type="term" value="F:quercetin 3-O-glucosyltransferase activity"/>
    <property type="evidence" value="ECO:0000318"/>
    <property type="project" value="GO_Central"/>
</dbReference>
<dbReference type="GO" id="GO:0080044">
    <property type="term" value="F:quercetin 7-O-glucosyltransferase activity"/>
    <property type="evidence" value="ECO:0000318"/>
    <property type="project" value="GO_Central"/>
</dbReference>
<dbReference type="CDD" id="cd03784">
    <property type="entry name" value="GT1_Gtf-like"/>
    <property type="match status" value="1"/>
</dbReference>
<dbReference type="FunFam" id="3.40.50.2000:FF:000040">
    <property type="entry name" value="UDP-glycosyltransferase 76C1"/>
    <property type="match status" value="1"/>
</dbReference>
<dbReference type="FunFam" id="3.40.50.2000:FF:000120">
    <property type="entry name" value="UDP-glycosyltransferase 76C1"/>
    <property type="match status" value="1"/>
</dbReference>
<dbReference type="Gene3D" id="3.40.50.2000">
    <property type="entry name" value="Glycogen Phosphorylase B"/>
    <property type="match status" value="2"/>
</dbReference>
<dbReference type="InterPro" id="IPR002213">
    <property type="entry name" value="UDP_glucos_trans"/>
</dbReference>
<dbReference type="PANTHER" id="PTHR11926">
    <property type="entry name" value="GLUCOSYL/GLUCURONOSYL TRANSFERASES"/>
    <property type="match status" value="1"/>
</dbReference>
<dbReference type="PANTHER" id="PTHR11926:SF1374">
    <property type="entry name" value="UDP-GLYCOSYLTRANSFERASE 76F1-RELATED"/>
    <property type="match status" value="1"/>
</dbReference>
<dbReference type="Pfam" id="PF00201">
    <property type="entry name" value="UDPGT"/>
    <property type="match status" value="1"/>
</dbReference>
<dbReference type="SUPFAM" id="SSF53756">
    <property type="entry name" value="UDP-Glycosyltransferase/glycogen phosphorylase"/>
    <property type="match status" value="1"/>
</dbReference>
<evidence type="ECO:0000250" key="1">
    <source>
        <dbReference type="UniProtKB" id="A0A0A1HA03"/>
    </source>
</evidence>
<evidence type="ECO:0000250" key="2">
    <source>
        <dbReference type="UniProtKB" id="P51094"/>
    </source>
</evidence>
<evidence type="ECO:0000269" key="3">
    <source>
    </source>
</evidence>
<evidence type="ECO:0000269" key="4">
    <source>
    </source>
</evidence>
<evidence type="ECO:0000305" key="5"/>
<name>BX9_MAIZE</name>
<keyword id="KW-0903">Direct protein sequencing</keyword>
<keyword id="KW-0328">Glycosyltransferase</keyword>
<keyword id="KW-1185">Reference proteome</keyword>
<keyword id="KW-0808">Transferase</keyword>
<proteinExistence type="evidence at protein level"/>
<feature type="chain" id="PRO_0000415307" description="DIMBOA UDP-glucosyltransferase BX9">
    <location>
        <begin position="1"/>
        <end position="462"/>
    </location>
</feature>
<feature type="active site" description="Proton acceptor" evidence="1">
    <location>
        <position position="24"/>
    </location>
</feature>
<feature type="active site" description="Charge relay" evidence="1">
    <location>
        <position position="115"/>
    </location>
</feature>
<feature type="binding site" evidence="2">
    <location>
        <position position="24"/>
    </location>
    <ligand>
        <name>an anthocyanidin</name>
        <dbReference type="ChEBI" id="CHEBI:143576"/>
    </ligand>
</feature>
<feature type="binding site" evidence="1">
    <location>
        <position position="137"/>
    </location>
    <ligand>
        <name>UDP-alpha-D-glucose</name>
        <dbReference type="ChEBI" id="CHEBI:58885"/>
    </ligand>
</feature>
<feature type="binding site" evidence="1">
    <location>
        <position position="336"/>
    </location>
    <ligand>
        <name>UDP-alpha-D-glucose</name>
        <dbReference type="ChEBI" id="CHEBI:58885"/>
    </ligand>
</feature>
<feature type="binding site" evidence="1">
    <location>
        <position position="338"/>
    </location>
    <ligand>
        <name>UDP-alpha-D-glucose</name>
        <dbReference type="ChEBI" id="CHEBI:58885"/>
    </ligand>
</feature>
<feature type="binding site" evidence="1">
    <location>
        <position position="353"/>
    </location>
    <ligand>
        <name>UDP-alpha-D-glucose</name>
        <dbReference type="ChEBI" id="CHEBI:58885"/>
    </ligand>
</feature>
<feature type="binding site" evidence="1">
    <location>
        <position position="356"/>
    </location>
    <ligand>
        <name>UDP-alpha-D-glucose</name>
        <dbReference type="ChEBI" id="CHEBI:58885"/>
    </ligand>
</feature>
<feature type="binding site" evidence="1">
    <location>
        <position position="357"/>
    </location>
    <ligand>
        <name>UDP-alpha-D-glucose</name>
        <dbReference type="ChEBI" id="CHEBI:58885"/>
    </ligand>
</feature>
<feature type="binding site" evidence="1">
    <location>
        <position position="358"/>
    </location>
    <ligand>
        <name>UDP-alpha-D-glucose</name>
        <dbReference type="ChEBI" id="CHEBI:58885"/>
    </ligand>
</feature>
<feature type="binding site" evidence="1">
    <location>
        <position position="361"/>
    </location>
    <ligand>
        <name>UDP-alpha-D-glucose</name>
        <dbReference type="ChEBI" id="CHEBI:58885"/>
    </ligand>
</feature>
<feature type="binding site" evidence="2">
    <location>
        <position position="376"/>
    </location>
    <ligand>
        <name>an anthocyanidin</name>
        <dbReference type="ChEBI" id="CHEBI:143576"/>
    </ligand>
</feature>
<feature type="binding site" evidence="1">
    <location>
        <position position="377"/>
    </location>
    <ligand>
        <name>UDP-alpha-D-glucose</name>
        <dbReference type="ChEBI" id="CHEBI:58885"/>
    </ligand>
</feature>
<feature type="binding site" evidence="1">
    <location>
        <position position="378"/>
    </location>
    <ligand>
        <name>UDP-alpha-D-glucose</name>
        <dbReference type="ChEBI" id="CHEBI:58885"/>
    </ligand>
</feature>
<feature type="sequence conflict" description="In Ref. 1; AAL57038." evidence="5" ref="1">
    <original>T</original>
    <variation>TGA</variation>
    <location>
        <position position="6"/>
    </location>
</feature>
<feature type="sequence conflict" description="In Ref. 1; AAL57038." evidence="5" ref="1">
    <original>L</original>
    <variation>R</variation>
    <location>
        <position position="176"/>
    </location>
</feature>
<feature type="sequence conflict" description="In Ref. 1; AAL57038." evidence="5" ref="1">
    <original>A</original>
    <variation>T</variation>
    <location>
        <position position="334"/>
    </location>
</feature>
<feature type="sequence conflict" description="In Ref. 1; AAL57038." evidence="5" ref="1">
    <original>A</original>
    <variation>T</variation>
    <location>
        <position position="446"/>
    </location>
</feature>
<accession>B4G072</accession>
<accession>Q8W2B6</accession>
<protein>
    <recommendedName>
        <fullName>DIMBOA UDP-glucosyltransferase BX9</fullName>
        <ecNumber evidence="3 4">2.4.1.202</ecNumber>
    </recommendedName>
    <alternativeName>
        <fullName>2,4-dihydroxy-7-methoxy-2H-1,4-benzoxazin-3(4H)-one 2-D-glucosyltransferase BX9</fullName>
    </alternativeName>
    <alternativeName>
        <fullName>Protein BENZOXAZINLESS 9</fullName>
    </alternativeName>
</protein>
<sequence length="462" mass="50017">MASSRTGAGAGGRVVVFPFPFQGHFNPVMRLARALHARGLAITVFHSGALDPADYPADYRFVPVTVEADPKLLASEDIAAIVTTLNASCDAPFRARLSALLAAEGRDSVRCVFTDVSWNAVLTASSDLGVPALGMMTASAASLRDYMAYRTLIDKGYLPVKEERKEDPVPELPPYLVKDLLRVDTSDLEEFAELLARTVTAARRASGLIFNTFPLIETDTLAEIHKALSVPVFAVAPLNKLVPTATASLHGVVQADRGCLQWLDTQQPGSVLYVSFGSMAAMDPHEFVELAWGLADSKRPFVWVVRPNLIRGFESGALPDGVEDEVRGRGIVVAWAPQEEVLAHPAVGGFLTHNGWNSTVEAISEGVPMVCCPRHGDQFGNMRYVCDVWKVGTELVGEQLERGQVKAAIDRLFGTKEGEEIKERMKEFKIAAAKGIGIGVDVDETASPRTDLTDLVDLIKSF</sequence>
<comment type="function">
    <text evidence="3">Glucosyltransferase involved in the last step of benzoxazinoid glucoside biosynthesis. Catalyzes the glucosylation of hydroxamic acids utilizing UDP-glucose as glucose doner, reducing the toxicity of these natural insecticides for storage. Can use DIMBOA and DIBOA as substrates, HMBOA (2-hydroxy-7-methoxy-2H-1,4-benzoxazin-3(4H)-one) and HBOA (2-hydroxy-2H-1,4-benzoxazin-3(4H)-one) with a lower efficiency, but not indole acetic acid or quercitin.</text>
</comment>
<comment type="catalytic activity">
    <reaction evidence="3 4">
        <text>DIMBOA + UDP-alpha-D-glucose = DIMBOA beta-D-glucoside + UDP + H(+)</text>
        <dbReference type="Rhea" id="RHEA:15541"/>
        <dbReference type="ChEBI" id="CHEBI:15378"/>
        <dbReference type="ChEBI" id="CHEBI:18048"/>
        <dbReference type="ChEBI" id="CHEBI:37573"/>
        <dbReference type="ChEBI" id="CHEBI:58223"/>
        <dbReference type="ChEBI" id="CHEBI:58885"/>
        <dbReference type="EC" id="2.4.1.202"/>
    </reaction>
</comment>
<comment type="catalytic activity">
    <reaction evidence="3 4">
        <text>DIBOA + UDP-alpha-D-glucose = DIBOA beta-D-glucoside + UDP + H(+)</text>
        <dbReference type="Rhea" id="RHEA:33955"/>
        <dbReference type="ChEBI" id="CHEBI:15378"/>
        <dbReference type="ChEBI" id="CHEBI:58223"/>
        <dbReference type="ChEBI" id="CHEBI:58885"/>
        <dbReference type="ChEBI" id="CHEBI:63558"/>
        <dbReference type="ChEBI" id="CHEBI:63670"/>
        <dbReference type="EC" id="2.4.1.202"/>
    </reaction>
</comment>
<comment type="cofactor">
    <cofactor evidence="4">
        <name>Mg(2+)</name>
        <dbReference type="ChEBI" id="CHEBI:18420"/>
    </cofactor>
    <cofactor evidence="4">
        <name>Ca(2+)</name>
        <dbReference type="ChEBI" id="CHEBI:29108"/>
    </cofactor>
</comment>
<comment type="biophysicochemical properties">
    <kinetics>
        <KM evidence="3 4">71 uM for 2,4-dihydroxy-7-methoxy-2H-1,4-benzoxazin-3(4H)-one (DIMBOA)</KM>
        <KM evidence="3 4">1300 uM for 2,4-dihydroxy-2H-1,4-benzoxazin-3(4H)-one (DIBOA)</KM>
        <KM evidence="3 4">96 uM for uridine 5'-diphosphoglucose (UDPG)</KM>
        <text>kcat is 11.6 sec(-1) for DIMBOA. kcat is 12.5 sec(-1) for DIBOA. kcat is 22.6 sec(-1) for UDPG.</text>
    </kinetics>
    <phDependence>
        <text evidence="3 4">Optimum pH is 8.5.</text>
    </phDependence>
    <temperatureDependence>
        <text evidence="3 4">Optimum temperature is 45 degrees Celsius.</text>
    </temperatureDependence>
</comment>
<comment type="tissue specificity">
    <text evidence="3">Expressed at the same levels in roots and shoots.</text>
</comment>
<comment type="developmental stage">
    <text evidence="3">Highly expressed in young seedlings up to 4 days after imbibition.</text>
</comment>
<comment type="similarity">
    <text evidence="5">Belongs to the UDP-glycosyltransferase family.</text>
</comment>
<reference key="1">
    <citation type="journal article" date="2001" name="Plant J.">
        <title>Two glucosyltransferases are involved in detoxification of benzoxazinoids in maize.</title>
        <authorList>
            <person name="von Rad U."/>
            <person name="Huttl R."/>
            <person name="Lottspeich F."/>
            <person name="Gierl A."/>
            <person name="Frey M."/>
        </authorList>
    </citation>
    <scope>NUCLEOTIDE SEQUENCE [GENOMIC DNA]</scope>
    <scope>PARTIAL PROTEIN SEQUENCE</scope>
    <scope>FUNCTION</scope>
    <scope>CATALYTIC ACTIVITY</scope>
    <scope>BIOPHYSICOCHEMICAL PROPERTIES</scope>
    <scope>DEVELOPMENTAL STAGE</scope>
    <scope>TISSUE SPECIFICITY</scope>
    <source>
        <strain>cv. CI31A</strain>
    </source>
</reference>
<reference key="2">
    <citation type="submission" date="2008-07" db="EMBL/GenBank/DDBJ databases">
        <title>Maize full-length cDNA project.</title>
        <authorList>
            <person name="Yu Y."/>
            <person name="Currie J."/>
            <person name="Lomeli R."/>
            <person name="Angelova A."/>
            <person name="Collura K."/>
            <person name="Wissotski M."/>
            <person name="Campos D."/>
            <person name="Kudrna D."/>
            <person name="Golser W."/>
            <person name="Ashely E."/>
            <person name="Haller K."/>
            <person name="Descour A."/>
            <person name="Fernandes J."/>
            <person name="Zuccolo A."/>
            <person name="Soderlund C."/>
            <person name="Walbot V."/>
        </authorList>
    </citation>
    <scope>NUCLEOTIDE SEQUENCE [LARGE SCALE MRNA]</scope>
    <source>
        <strain>cv. B73</strain>
    </source>
</reference>
<reference key="3">
    <citation type="journal article" date="1989" name="Plant Physiol.">
        <title>Hydroxamic acid glucosyltransferases from maize seedlings.</title>
        <authorList>
            <person name="Bailey B.A."/>
            <person name="Larson R.L."/>
        </authorList>
    </citation>
    <scope>CATALYTIC ACTIVITY</scope>
    <scope>BIOPHYSICOCHEMICAL PROPERTIES</scope>
    <scope>COFACTOR</scope>
    <source>
        <strain>cv. CI31A</strain>
    </source>
</reference>
<gene>
    <name type="primary">BX9</name>
</gene>